<protein>
    <recommendedName>
        <fullName evidence="6">Conotoxin Cal14.6</fullName>
    </recommendedName>
    <alternativeName>
        <fullName evidence="5">Conotoxin Cal14.2</fullName>
    </alternativeName>
    <alternativeName>
        <fullName evidence="5">Conotoxin Cal14a</fullName>
    </alternativeName>
    <alternativeName>
        <fullName evidence="4">Conotoxin Cl14.6</fullName>
    </alternativeName>
    <alternativeName>
        <fullName evidence="4">Conotoxin Cl14a</fullName>
    </alternativeName>
</protein>
<keyword id="KW-0027">Amidation</keyword>
<keyword id="KW-0903">Direct protein sequencing</keyword>
<keyword id="KW-1015">Disulfide bond</keyword>
<keyword id="KW-0379">Hydroxylation</keyword>
<keyword id="KW-0872">Ion channel impairing toxin</keyword>
<keyword id="KW-0528">Neurotoxin</keyword>
<keyword id="KW-0964">Secreted</keyword>
<keyword id="KW-0732">Signal</keyword>
<keyword id="KW-0800">Toxin</keyword>
<accession>D2Y168</accession>
<accession>D6C4J5</accession>
<organism>
    <name type="scientific">Californiconus californicus</name>
    <name type="common">California cone</name>
    <name type="synonym">Conus californicus</name>
    <dbReference type="NCBI Taxonomy" id="1736779"/>
    <lineage>
        <taxon>Eukaryota</taxon>
        <taxon>Metazoa</taxon>
        <taxon>Spiralia</taxon>
        <taxon>Lophotrochozoa</taxon>
        <taxon>Mollusca</taxon>
        <taxon>Gastropoda</taxon>
        <taxon>Caenogastropoda</taxon>
        <taxon>Neogastropoda</taxon>
        <taxon>Conoidea</taxon>
        <taxon>Conidae</taxon>
        <taxon>Californiconus</taxon>
    </lineage>
</organism>
<evidence type="ECO:0000255" key="1"/>
<evidence type="ECO:0000269" key="2">
    <source>
    </source>
</evidence>
<evidence type="ECO:0000269" key="3">
    <source>
    </source>
</evidence>
<evidence type="ECO:0000303" key="4">
    <source>
    </source>
</evidence>
<evidence type="ECO:0000303" key="5">
    <source>
    </source>
</evidence>
<evidence type="ECO:0000305" key="6"/>
<evidence type="ECO:0000305" key="7">
    <source>
    </source>
</evidence>
<evidence type="ECO:0000305" key="8">
    <source>
    </source>
</evidence>
<proteinExistence type="evidence at protein level"/>
<feature type="signal peptide" evidence="1">
    <location>
        <begin position="1"/>
        <end position="21"/>
    </location>
</feature>
<feature type="propeptide" id="PRO_5000566281" evidence="7 8">
    <location>
        <begin position="22"/>
        <end position="38"/>
    </location>
</feature>
<feature type="peptide" id="PRO_5000566282" description="Conotoxin Cal14.6" evidence="3 7">
    <location>
        <begin position="40"/>
        <end position="60"/>
    </location>
</feature>
<feature type="modified residue" description="4-hydroxyproline; partial" evidence="8">
    <location>
        <position position="57"/>
    </location>
</feature>
<feature type="modified residue" description="Proline amide" evidence="8">
    <location>
        <position position="60"/>
    </location>
</feature>
<feature type="sequence conflict" description="In Ref. 1; ADB93107." evidence="6" ref="1">
    <original>G</original>
    <variation>R</variation>
    <location>
        <position position="28"/>
    </location>
</feature>
<dbReference type="EMBL" id="FJ959137">
    <property type="protein sequence ID" value="ADB93107.1"/>
    <property type="molecule type" value="Genomic_DNA"/>
</dbReference>
<dbReference type="EMBL" id="GU290198">
    <property type="protein sequence ID" value="ADB43125.1"/>
    <property type="molecule type" value="mRNA"/>
</dbReference>
<dbReference type="ConoServer" id="3980">
    <property type="toxin name" value="Cal14.6 precursor"/>
</dbReference>
<dbReference type="GO" id="GO:0005576">
    <property type="term" value="C:extracellular region"/>
    <property type="evidence" value="ECO:0007669"/>
    <property type="project" value="UniProtKB-SubCell"/>
</dbReference>
<dbReference type="GO" id="GO:0099106">
    <property type="term" value="F:ion channel regulator activity"/>
    <property type="evidence" value="ECO:0007669"/>
    <property type="project" value="UniProtKB-KW"/>
</dbReference>
<dbReference type="GO" id="GO:0090729">
    <property type="term" value="F:toxin activity"/>
    <property type="evidence" value="ECO:0007669"/>
    <property type="project" value="UniProtKB-KW"/>
</dbReference>
<comment type="function">
    <text evidence="6">Probable neurotoxin with unknown target. Possibly targets ion channels.</text>
</comment>
<comment type="subcellular location">
    <subcellularLocation>
        <location evidence="2 3">Secreted</location>
    </subcellularLocation>
</comment>
<comment type="tissue specificity">
    <text evidence="7 8">Expressed by the venom duct.</text>
</comment>
<comment type="domain">
    <text>The cysteine framework is XIV (C-C-C-C).</text>
</comment>
<comment type="PTM">
    <text>Contains 2 disulfide bonds.</text>
</comment>
<name>CUE6_CONCL</name>
<reference key="1">
    <citation type="journal article" date="2010" name="Mol. Phylogenet. Evol.">
        <title>Evolution of Conus peptide toxins: analysis of Conus californicus Reeve, 1844.</title>
        <authorList>
            <person name="Biggs J.S."/>
            <person name="Watkins M."/>
            <person name="Puillandre N."/>
            <person name="Ownby J.P."/>
            <person name="Lopez-Vera E."/>
            <person name="Christensen S."/>
            <person name="Moreno K.J."/>
            <person name="Bernaldez J."/>
            <person name="Licea-Navarro A."/>
            <person name="Corneli P.S."/>
            <person name="Olivera B.M."/>
        </authorList>
    </citation>
    <scope>NUCLEOTIDE SEQUENCE [GENOMIC DNA]</scope>
    <scope>PROTEIN SEQUENCE OF 40-61</scope>
    <scope>SUBCELLULAR LOCATION</scope>
    <source>
        <tissue>Venom</tissue>
    </source>
</reference>
<reference key="2">
    <citation type="journal article" date="2011" name="Toxicon">
        <title>Diversity of conotoxin types from Conus californicus reflects a diversity of prey types and a novel evolutionary history.</title>
        <authorList>
            <person name="Elliger C.A."/>
            <person name="Richmond T.A."/>
            <person name="Lebaric Z.N."/>
            <person name="Pierce N.T."/>
            <person name="Sweedler J.V."/>
            <person name="Gilly W.F."/>
        </authorList>
    </citation>
    <scope>NUCLEOTIDE SEQUENCE [MRNA]</scope>
    <scope>HYDROXYLATION AT PRO-57</scope>
    <scope>AMIDATION AT PRO-60</scope>
    <scope>IDENTIFICATION BY MASS SPECTROMETRY</scope>
    <scope>SUBCELLULAR LOCATION</scope>
    <source>
        <tissue>Venom</tissue>
        <tissue>Venom duct</tissue>
    </source>
</reference>
<sequence>MKFLLFLSVALLLTSFIETEAGPVNEAGVERLFRALVGRGCPADCPNTCDSSNKCSPGFPG</sequence>